<sequence>MSATQNYGTGRRKTATARVFLRPGTGKISINNRELDNFFGRETARMVVRQPLELTETAEKFDIYVTVLGGGVSGQAGAIRHGITRALISYDESLRSPLRKAGFVTRDAREVERKKVGLRKARKRPQYSKR</sequence>
<protein>
    <recommendedName>
        <fullName evidence="1">Small ribosomal subunit protein uS9</fullName>
    </recommendedName>
    <alternativeName>
        <fullName evidence="2">30S ribosomal protein S9</fullName>
    </alternativeName>
</protein>
<reference key="1">
    <citation type="journal article" date="2008" name="Proc. Natl. Acad. Sci. U.S.A.">
        <title>Nitrogen fixation island and rhizosphere competence traits in the genome of root-associated Pseudomonas stutzeri A1501.</title>
        <authorList>
            <person name="Yan Y."/>
            <person name="Yang J."/>
            <person name="Dou Y."/>
            <person name="Chen M."/>
            <person name="Ping S."/>
            <person name="Peng J."/>
            <person name="Lu W."/>
            <person name="Zhang W."/>
            <person name="Yao Z."/>
            <person name="Li H."/>
            <person name="Liu W."/>
            <person name="He S."/>
            <person name="Geng L."/>
            <person name="Zhang X."/>
            <person name="Yang F."/>
            <person name="Yu H."/>
            <person name="Zhan Y."/>
            <person name="Li D."/>
            <person name="Lin Z."/>
            <person name="Wang Y."/>
            <person name="Elmerich C."/>
            <person name="Lin M."/>
            <person name="Jin Q."/>
        </authorList>
    </citation>
    <scope>NUCLEOTIDE SEQUENCE [LARGE SCALE GENOMIC DNA]</scope>
    <source>
        <strain>A1501</strain>
    </source>
</reference>
<organism>
    <name type="scientific">Stutzerimonas stutzeri (strain A1501)</name>
    <name type="common">Pseudomonas stutzeri</name>
    <dbReference type="NCBI Taxonomy" id="379731"/>
    <lineage>
        <taxon>Bacteria</taxon>
        <taxon>Pseudomonadati</taxon>
        <taxon>Pseudomonadota</taxon>
        <taxon>Gammaproteobacteria</taxon>
        <taxon>Pseudomonadales</taxon>
        <taxon>Pseudomonadaceae</taxon>
        <taxon>Stutzerimonas</taxon>
    </lineage>
</organism>
<accession>A4VIF8</accession>
<proteinExistence type="inferred from homology"/>
<keyword id="KW-1185">Reference proteome</keyword>
<keyword id="KW-0687">Ribonucleoprotein</keyword>
<keyword id="KW-0689">Ribosomal protein</keyword>
<evidence type="ECO:0000255" key="1">
    <source>
        <dbReference type="HAMAP-Rule" id="MF_00532"/>
    </source>
</evidence>
<evidence type="ECO:0000305" key="2"/>
<name>RS9_STUS1</name>
<gene>
    <name evidence="1" type="primary">rpsI</name>
    <name type="ordered locus">PST_1062</name>
</gene>
<dbReference type="EMBL" id="CP000304">
    <property type="protein sequence ID" value="ABP78759.1"/>
    <property type="molecule type" value="Genomic_DNA"/>
</dbReference>
<dbReference type="RefSeq" id="WP_011912249.1">
    <property type="nucleotide sequence ID" value="NC_009434.1"/>
</dbReference>
<dbReference type="SMR" id="A4VIF8"/>
<dbReference type="KEGG" id="psa:PST_1062"/>
<dbReference type="eggNOG" id="COG0103">
    <property type="taxonomic scope" value="Bacteria"/>
</dbReference>
<dbReference type="HOGENOM" id="CLU_046483_2_1_6"/>
<dbReference type="Proteomes" id="UP000000233">
    <property type="component" value="Chromosome"/>
</dbReference>
<dbReference type="GO" id="GO:0022627">
    <property type="term" value="C:cytosolic small ribosomal subunit"/>
    <property type="evidence" value="ECO:0007669"/>
    <property type="project" value="TreeGrafter"/>
</dbReference>
<dbReference type="GO" id="GO:0003723">
    <property type="term" value="F:RNA binding"/>
    <property type="evidence" value="ECO:0007669"/>
    <property type="project" value="TreeGrafter"/>
</dbReference>
<dbReference type="GO" id="GO:0003735">
    <property type="term" value="F:structural constituent of ribosome"/>
    <property type="evidence" value="ECO:0007669"/>
    <property type="project" value="InterPro"/>
</dbReference>
<dbReference type="GO" id="GO:0006412">
    <property type="term" value="P:translation"/>
    <property type="evidence" value="ECO:0007669"/>
    <property type="project" value="UniProtKB-UniRule"/>
</dbReference>
<dbReference type="FunFam" id="3.30.230.10:FF:000001">
    <property type="entry name" value="30S ribosomal protein S9"/>
    <property type="match status" value="1"/>
</dbReference>
<dbReference type="Gene3D" id="3.30.230.10">
    <property type="match status" value="1"/>
</dbReference>
<dbReference type="HAMAP" id="MF_00532_B">
    <property type="entry name" value="Ribosomal_uS9_B"/>
    <property type="match status" value="1"/>
</dbReference>
<dbReference type="InterPro" id="IPR020568">
    <property type="entry name" value="Ribosomal_Su5_D2-typ_SF"/>
</dbReference>
<dbReference type="InterPro" id="IPR000754">
    <property type="entry name" value="Ribosomal_uS9"/>
</dbReference>
<dbReference type="InterPro" id="IPR023035">
    <property type="entry name" value="Ribosomal_uS9_bac/plastid"/>
</dbReference>
<dbReference type="InterPro" id="IPR020574">
    <property type="entry name" value="Ribosomal_uS9_CS"/>
</dbReference>
<dbReference type="InterPro" id="IPR014721">
    <property type="entry name" value="Ribsml_uS5_D2-typ_fold_subgr"/>
</dbReference>
<dbReference type="NCBIfam" id="NF001099">
    <property type="entry name" value="PRK00132.1"/>
    <property type="match status" value="1"/>
</dbReference>
<dbReference type="PANTHER" id="PTHR21569">
    <property type="entry name" value="RIBOSOMAL PROTEIN S9"/>
    <property type="match status" value="1"/>
</dbReference>
<dbReference type="PANTHER" id="PTHR21569:SF1">
    <property type="entry name" value="SMALL RIBOSOMAL SUBUNIT PROTEIN US9M"/>
    <property type="match status" value="1"/>
</dbReference>
<dbReference type="Pfam" id="PF00380">
    <property type="entry name" value="Ribosomal_S9"/>
    <property type="match status" value="1"/>
</dbReference>
<dbReference type="SUPFAM" id="SSF54211">
    <property type="entry name" value="Ribosomal protein S5 domain 2-like"/>
    <property type="match status" value="1"/>
</dbReference>
<dbReference type="PROSITE" id="PS00360">
    <property type="entry name" value="RIBOSOMAL_S9"/>
    <property type="match status" value="1"/>
</dbReference>
<feature type="chain" id="PRO_1000051299" description="Small ribosomal subunit protein uS9">
    <location>
        <begin position="1"/>
        <end position="130"/>
    </location>
</feature>
<comment type="similarity">
    <text evidence="1">Belongs to the universal ribosomal protein uS9 family.</text>
</comment>